<evidence type="ECO:0000255" key="1"/>
<evidence type="ECO:0000256" key="2">
    <source>
        <dbReference type="SAM" id="MobiDB-lite"/>
    </source>
</evidence>
<evidence type="ECO:0000305" key="3"/>
<dbReference type="EC" id="2.4.1.-"/>
<dbReference type="EMBL" id="AL606632">
    <property type="protein sequence ID" value="CAD41009.3"/>
    <property type="molecule type" value="Genomic_DNA"/>
</dbReference>
<dbReference type="EMBL" id="AP008210">
    <property type="protein sequence ID" value="BAF14725.2"/>
    <property type="molecule type" value="Genomic_DNA"/>
</dbReference>
<dbReference type="EMBL" id="AP014960">
    <property type="status" value="NOT_ANNOTATED_CDS"/>
    <property type="molecule type" value="Genomic_DNA"/>
</dbReference>
<dbReference type="RefSeq" id="XP_015634837.1">
    <property type="nucleotide sequence ID" value="XM_015779351.1"/>
</dbReference>
<dbReference type="SMR" id="Q7XUT9"/>
<dbReference type="FunCoup" id="Q7XUT9">
    <property type="interactions" value="357"/>
</dbReference>
<dbReference type="STRING" id="39947.Q7XUT9"/>
<dbReference type="CAZy" id="GT2">
    <property type="family name" value="Glycosyltransferase Family 2"/>
</dbReference>
<dbReference type="PaxDb" id="39947-Q7XUT9"/>
<dbReference type="GeneID" id="4335860"/>
<dbReference type="KEGG" id="dosa:Os04g0429500"/>
<dbReference type="KEGG" id="osa:4335860"/>
<dbReference type="eggNOG" id="ENOG502QTT0">
    <property type="taxonomic scope" value="Eukaryota"/>
</dbReference>
<dbReference type="HOGENOM" id="CLU_001418_2_2_1"/>
<dbReference type="InParanoid" id="Q7XUT9"/>
<dbReference type="OrthoDB" id="72851at2759"/>
<dbReference type="Proteomes" id="UP000000763">
    <property type="component" value="Chromosome 4"/>
</dbReference>
<dbReference type="Proteomes" id="UP000059680">
    <property type="component" value="Chromosome 4"/>
</dbReference>
<dbReference type="GO" id="GO:0000139">
    <property type="term" value="C:Golgi membrane"/>
    <property type="evidence" value="ECO:0007669"/>
    <property type="project" value="UniProtKB-SubCell"/>
</dbReference>
<dbReference type="GO" id="GO:0005886">
    <property type="term" value="C:plasma membrane"/>
    <property type="evidence" value="ECO:0000318"/>
    <property type="project" value="GO_Central"/>
</dbReference>
<dbReference type="GO" id="GO:0016760">
    <property type="term" value="F:cellulose synthase (UDP-forming) activity"/>
    <property type="evidence" value="ECO:0007669"/>
    <property type="project" value="InterPro"/>
</dbReference>
<dbReference type="GO" id="GO:0016759">
    <property type="term" value="F:cellulose synthase activity"/>
    <property type="evidence" value="ECO:0000318"/>
    <property type="project" value="GO_Central"/>
</dbReference>
<dbReference type="GO" id="GO:0071555">
    <property type="term" value="P:cell wall organization"/>
    <property type="evidence" value="ECO:0007669"/>
    <property type="project" value="UniProtKB-KW"/>
</dbReference>
<dbReference type="GO" id="GO:0030244">
    <property type="term" value="P:cellulose biosynthetic process"/>
    <property type="evidence" value="ECO:0000318"/>
    <property type="project" value="GO_Central"/>
</dbReference>
<dbReference type="GO" id="GO:0009833">
    <property type="term" value="P:plant-type primary cell wall biogenesis"/>
    <property type="evidence" value="ECO:0000318"/>
    <property type="project" value="GO_Central"/>
</dbReference>
<dbReference type="Gene3D" id="3.90.550.10">
    <property type="entry name" value="Spore Coat Polysaccharide Biosynthesis Protein SpsA, Chain A"/>
    <property type="match status" value="1"/>
</dbReference>
<dbReference type="InterPro" id="IPR005150">
    <property type="entry name" value="Cellulose_synth"/>
</dbReference>
<dbReference type="InterPro" id="IPR029044">
    <property type="entry name" value="Nucleotide-diphossugar_trans"/>
</dbReference>
<dbReference type="PANTHER" id="PTHR13301">
    <property type="entry name" value="X-BOX TRANSCRIPTION FACTOR-RELATED"/>
    <property type="match status" value="1"/>
</dbReference>
<dbReference type="Pfam" id="PF03552">
    <property type="entry name" value="Cellulose_synt"/>
    <property type="match status" value="3"/>
</dbReference>
<dbReference type="SUPFAM" id="SSF53448">
    <property type="entry name" value="Nucleotide-diphospho-sugar transferases"/>
    <property type="match status" value="1"/>
</dbReference>
<reference key="1">
    <citation type="journal article" date="2002" name="Nature">
        <title>Sequence and analysis of rice chromosome 4.</title>
        <authorList>
            <person name="Feng Q."/>
            <person name="Zhang Y."/>
            <person name="Hao P."/>
            <person name="Wang S."/>
            <person name="Fu G."/>
            <person name="Huang Y."/>
            <person name="Li Y."/>
            <person name="Zhu J."/>
            <person name="Liu Y."/>
            <person name="Hu X."/>
            <person name="Jia P."/>
            <person name="Zhang Y."/>
            <person name="Zhao Q."/>
            <person name="Ying K."/>
            <person name="Yu S."/>
            <person name="Tang Y."/>
            <person name="Weng Q."/>
            <person name="Zhang L."/>
            <person name="Lu Y."/>
            <person name="Mu J."/>
            <person name="Lu Y."/>
            <person name="Zhang L.S."/>
            <person name="Yu Z."/>
            <person name="Fan D."/>
            <person name="Liu X."/>
            <person name="Lu T."/>
            <person name="Li C."/>
            <person name="Wu Y."/>
            <person name="Sun T."/>
            <person name="Lei H."/>
            <person name="Li T."/>
            <person name="Hu H."/>
            <person name="Guan J."/>
            <person name="Wu M."/>
            <person name="Zhang R."/>
            <person name="Zhou B."/>
            <person name="Chen Z."/>
            <person name="Chen L."/>
            <person name="Jin Z."/>
            <person name="Wang R."/>
            <person name="Yin H."/>
            <person name="Cai Z."/>
            <person name="Ren S."/>
            <person name="Lv G."/>
            <person name="Gu W."/>
            <person name="Zhu G."/>
            <person name="Tu Y."/>
            <person name="Jia J."/>
            <person name="Zhang Y."/>
            <person name="Chen J."/>
            <person name="Kang H."/>
            <person name="Chen X."/>
            <person name="Shao C."/>
            <person name="Sun Y."/>
            <person name="Hu Q."/>
            <person name="Zhang X."/>
            <person name="Zhang W."/>
            <person name="Wang L."/>
            <person name="Ding C."/>
            <person name="Sheng H."/>
            <person name="Gu J."/>
            <person name="Chen S."/>
            <person name="Ni L."/>
            <person name="Zhu F."/>
            <person name="Chen W."/>
            <person name="Lan L."/>
            <person name="Lai Y."/>
            <person name="Cheng Z."/>
            <person name="Gu M."/>
            <person name="Jiang J."/>
            <person name="Li J."/>
            <person name="Hong G."/>
            <person name="Xue Y."/>
            <person name="Han B."/>
        </authorList>
    </citation>
    <scope>NUCLEOTIDE SEQUENCE [LARGE SCALE GENOMIC DNA]</scope>
    <source>
        <strain>cv. Nipponbare</strain>
    </source>
</reference>
<reference key="2">
    <citation type="journal article" date="2005" name="Nature">
        <title>The map-based sequence of the rice genome.</title>
        <authorList>
            <consortium name="International rice genome sequencing project (IRGSP)"/>
        </authorList>
    </citation>
    <scope>NUCLEOTIDE SEQUENCE [LARGE SCALE GENOMIC DNA]</scope>
    <source>
        <strain>cv. Nipponbare</strain>
    </source>
</reference>
<reference key="3">
    <citation type="journal article" date="2008" name="Nucleic Acids Res.">
        <title>The rice annotation project database (RAP-DB): 2008 update.</title>
        <authorList>
            <consortium name="The rice annotation project (RAP)"/>
        </authorList>
    </citation>
    <scope>GENOME REANNOTATION</scope>
    <source>
        <strain>cv. Nipponbare</strain>
    </source>
</reference>
<reference key="4">
    <citation type="journal article" date="2013" name="Rice">
        <title>Improvement of the Oryza sativa Nipponbare reference genome using next generation sequence and optical map data.</title>
        <authorList>
            <person name="Kawahara Y."/>
            <person name="de la Bastide M."/>
            <person name="Hamilton J.P."/>
            <person name="Kanamori H."/>
            <person name="McCombie W.R."/>
            <person name="Ouyang S."/>
            <person name="Schwartz D.C."/>
            <person name="Tanaka T."/>
            <person name="Wu J."/>
            <person name="Zhou S."/>
            <person name="Childs K.L."/>
            <person name="Davidson R.M."/>
            <person name="Lin H."/>
            <person name="Quesada-Ocampo L."/>
            <person name="Vaillancourt B."/>
            <person name="Sakai H."/>
            <person name="Lee S.S."/>
            <person name="Kim J."/>
            <person name="Numa H."/>
            <person name="Itoh T."/>
            <person name="Buell C.R."/>
            <person name="Matsumoto T."/>
        </authorList>
    </citation>
    <scope>GENOME REANNOTATION</scope>
    <source>
        <strain>cv. Nipponbare</strain>
    </source>
</reference>
<reference key="5">
    <citation type="journal article" date="2002" name="Plant Physiol.">
        <title>Cellulose synthase-like genes of rice.</title>
        <authorList>
            <person name="Hazen S.P."/>
            <person name="Scott-Craig J.S."/>
            <person name="Walton J.D."/>
        </authorList>
    </citation>
    <scope>GENE FAMILY</scope>
    <scope>NOMENCLATURE</scope>
</reference>
<comment type="function">
    <text>Thought to be a Golgi-localized beta-glycan synthase that polymerize the backbones of noncellulosic polysaccharides (hemicelluloses) of plant cell wall.</text>
</comment>
<comment type="subcellular location">
    <subcellularLocation>
        <location evidence="3">Golgi apparatus membrane</location>
        <topology evidence="3">Multi-pass membrane protein</topology>
    </subcellularLocation>
</comment>
<comment type="similarity">
    <text evidence="3">Belongs to the glycosyltransferase 2 family. Plant cellulose synthase-like H subfamily.</text>
</comment>
<keyword id="KW-0961">Cell wall biogenesis/degradation</keyword>
<keyword id="KW-0328">Glycosyltransferase</keyword>
<keyword id="KW-0333">Golgi apparatus</keyword>
<keyword id="KW-0472">Membrane</keyword>
<keyword id="KW-1185">Reference proteome</keyword>
<keyword id="KW-0808">Transferase</keyword>
<keyword id="KW-0812">Transmembrane</keyword>
<keyword id="KW-1133">Transmembrane helix</keyword>
<name>CSLH2_ORYSJ</name>
<gene>
    <name type="primary">CSLH2</name>
    <name type="ordered locus">Os04g0429500</name>
    <name type="ordered locus">LOC_Os04g35020</name>
    <name type="ORF">OSJNBa0042L16.13</name>
</gene>
<organism>
    <name type="scientific">Oryza sativa subsp. japonica</name>
    <name type="common">Rice</name>
    <dbReference type="NCBI Taxonomy" id="39947"/>
    <lineage>
        <taxon>Eukaryota</taxon>
        <taxon>Viridiplantae</taxon>
        <taxon>Streptophyta</taxon>
        <taxon>Embryophyta</taxon>
        <taxon>Tracheophyta</taxon>
        <taxon>Spermatophyta</taxon>
        <taxon>Magnoliopsida</taxon>
        <taxon>Liliopsida</taxon>
        <taxon>Poales</taxon>
        <taxon>Poaceae</taxon>
        <taxon>BOP clade</taxon>
        <taxon>Oryzoideae</taxon>
        <taxon>Oryzeae</taxon>
        <taxon>Oryzinae</taxon>
        <taxon>Oryza</taxon>
        <taxon>Oryza sativa</taxon>
    </lineage>
</organism>
<sequence>MAVVAAAAATGSTTRSGGGGGEGTRSGRKKPPPPPLQERVPLGRRAAWAWRLAGLAVLLLLLALLALRLLRHHGGAGGDGGVWRVALVCEAWFAALCALNVSAKWSPVRFVTRPENLVAEGRTPSTTAAEYGELPAVDMLVTTADPALEPPLVTVNTVLSLLALDYPRAGERLACYVSDDGCSPLTCHALREAAGFAAAWVPFCRRYGVAVRAPFRYFSSSSSPESGGPADRKFLDDWTFMKDEYDKLVRRIKNTDERSLLRHGGGEFFAEFLNVERRNHPTIVKTRVSAVMTNAPIMLNMDCDMFVNNPQAVLHAMCLLLGFDDEASSGFVQAPQRFYDALKDDPFGNQMECFFKRFISGVQGVQGAFYAGTGCFHRRKAVYGVPPNFNGAEREDTIGSSSYKELHTRFGNSEELNESARNIIWDLSSKPMVDISSRIEVAKAVSACNYDIGTCWGQEVGWVYGSLTEDILTGQRIHAMGWRSVLMVTEPPAFMGSAPIGGPACLTQFKRWATGQSEIIISRNNPILATMFKRLKFRQCLAYLIVLGWPLRAPFELCYGLLGPYCILTNQSFLPKASEDGFSVPLALFISYNTYNFMEYMACGLSARAWWNNHRMQRIISVSAWTLAFLTVLLKSLGLSETVFEVTGKDKSMSDDDDNTDGADPGRFTFDSLPVFIPVTALAMLNIVAVTVGACRVAFGTAEGVPCAPGIGEFMCCGWLVLCFFPFVRGIVWGKGSYGIPWSVKLKASLLVAMFVTFCKRN</sequence>
<protein>
    <recommendedName>
        <fullName>Cellulose synthase-like protein H2</fullName>
        <ecNumber>2.4.1.-</ecNumber>
    </recommendedName>
    <alternativeName>
        <fullName>OsCslH2</fullName>
    </alternativeName>
</protein>
<feature type="chain" id="PRO_0000319412" description="Cellulose synthase-like protein H2">
    <location>
        <begin position="1"/>
        <end position="762"/>
    </location>
</feature>
<feature type="transmembrane region" description="Helical" evidence="1">
    <location>
        <begin position="47"/>
        <end position="67"/>
    </location>
</feature>
<feature type="transmembrane region" description="Helical" evidence="1">
    <location>
        <begin position="81"/>
        <end position="101"/>
    </location>
</feature>
<feature type="transmembrane region" description="Helical" evidence="1">
    <location>
        <begin position="541"/>
        <end position="561"/>
    </location>
</feature>
<feature type="transmembrane region" description="Helical" evidence="1">
    <location>
        <begin position="582"/>
        <end position="602"/>
    </location>
</feature>
<feature type="transmembrane region" description="Helical" evidence="1">
    <location>
        <begin position="619"/>
        <end position="639"/>
    </location>
</feature>
<feature type="transmembrane region" description="Helical" evidence="1">
    <location>
        <begin position="673"/>
        <end position="693"/>
    </location>
</feature>
<feature type="transmembrane region" description="Helical" evidence="1">
    <location>
        <begin position="708"/>
        <end position="728"/>
    </location>
</feature>
<feature type="transmembrane region" description="Helical" evidence="1">
    <location>
        <begin position="739"/>
        <end position="759"/>
    </location>
</feature>
<feature type="region of interest" description="Disordered" evidence="2">
    <location>
        <begin position="1"/>
        <end position="39"/>
    </location>
</feature>
<feature type="compositionally biased region" description="Low complexity" evidence="2">
    <location>
        <begin position="1"/>
        <end position="15"/>
    </location>
</feature>
<feature type="active site" evidence="1">
    <location>
        <position position="180"/>
    </location>
</feature>
<feature type="active site" evidence="1">
    <location>
        <position position="470"/>
    </location>
</feature>
<proteinExistence type="inferred from homology"/>
<accession>Q7XUT9</accession>
<accession>Q0JD62</accession>